<proteinExistence type="inferred from homology"/>
<gene>
    <name evidence="1" type="primary">moaC</name>
    <name type="ordered locus">Cagg_2842</name>
</gene>
<organism>
    <name type="scientific">Chloroflexus aggregans (strain MD-66 / DSM 9485)</name>
    <dbReference type="NCBI Taxonomy" id="326427"/>
    <lineage>
        <taxon>Bacteria</taxon>
        <taxon>Bacillati</taxon>
        <taxon>Chloroflexota</taxon>
        <taxon>Chloroflexia</taxon>
        <taxon>Chloroflexales</taxon>
        <taxon>Chloroflexineae</taxon>
        <taxon>Chloroflexaceae</taxon>
        <taxon>Chloroflexus</taxon>
    </lineage>
</organism>
<evidence type="ECO:0000255" key="1">
    <source>
        <dbReference type="HAMAP-Rule" id="MF_01224"/>
    </source>
</evidence>
<feature type="chain" id="PRO_1000213983" description="Cyclic pyranopterin monophosphate synthase">
    <location>
        <begin position="1"/>
        <end position="165"/>
    </location>
</feature>
<feature type="active site" evidence="1">
    <location>
        <position position="132"/>
    </location>
</feature>
<feature type="binding site" evidence="1">
    <location>
        <begin position="79"/>
        <end position="81"/>
    </location>
    <ligand>
        <name>substrate</name>
    </ligand>
</feature>
<feature type="binding site" evidence="1">
    <location>
        <begin position="117"/>
        <end position="118"/>
    </location>
    <ligand>
        <name>substrate</name>
    </ligand>
</feature>
<sequence>MSGSIDQLSHLDAAGRARMVDVGNKAVTAREAIARGRVVMQPATLQLIVSGGMPKGDVLAVARVAGIMAAKRTAELIPLCHLLNLSHASVNFTPDPAGNALEIEATVRCTGQTGVEMEALTAVSIAALTIYDMCKAVDKTMQIDGIRLIAKRGGRSGDWQREESA</sequence>
<reference key="1">
    <citation type="submission" date="2008-12" db="EMBL/GenBank/DDBJ databases">
        <title>Complete sequence of Chloroflexus aggregans DSM 9485.</title>
        <authorList>
            <consortium name="US DOE Joint Genome Institute"/>
            <person name="Lucas S."/>
            <person name="Copeland A."/>
            <person name="Lapidus A."/>
            <person name="Glavina del Rio T."/>
            <person name="Dalin E."/>
            <person name="Tice H."/>
            <person name="Pitluck S."/>
            <person name="Foster B."/>
            <person name="Larimer F."/>
            <person name="Land M."/>
            <person name="Hauser L."/>
            <person name="Kyrpides N."/>
            <person name="Mikhailova N."/>
            <person name="Bryant D.A."/>
            <person name="Richardson P."/>
        </authorList>
    </citation>
    <scope>NUCLEOTIDE SEQUENCE [LARGE SCALE GENOMIC DNA]</scope>
    <source>
        <strain>MD-66 / DSM 9485</strain>
    </source>
</reference>
<name>MOAC_CHLAD</name>
<comment type="function">
    <text evidence="1">Catalyzes the conversion of (8S)-3',8-cyclo-7,8-dihydroguanosine 5'-triphosphate to cyclic pyranopterin monophosphate (cPMP).</text>
</comment>
<comment type="catalytic activity">
    <reaction evidence="1">
        <text>(8S)-3',8-cyclo-7,8-dihydroguanosine 5'-triphosphate = cyclic pyranopterin phosphate + diphosphate</text>
        <dbReference type="Rhea" id="RHEA:49580"/>
        <dbReference type="ChEBI" id="CHEBI:33019"/>
        <dbReference type="ChEBI" id="CHEBI:59648"/>
        <dbReference type="ChEBI" id="CHEBI:131766"/>
        <dbReference type="EC" id="4.6.1.17"/>
    </reaction>
</comment>
<comment type="pathway">
    <text evidence="1">Cofactor biosynthesis; molybdopterin biosynthesis.</text>
</comment>
<comment type="subunit">
    <text evidence="1">Homohexamer; trimer of dimers.</text>
</comment>
<comment type="similarity">
    <text evidence="1">Belongs to the MoaC family.</text>
</comment>
<dbReference type="EC" id="4.6.1.17" evidence="1"/>
<dbReference type="EMBL" id="CP001337">
    <property type="protein sequence ID" value="ACL25704.1"/>
    <property type="molecule type" value="Genomic_DNA"/>
</dbReference>
<dbReference type="RefSeq" id="WP_015941560.1">
    <property type="nucleotide sequence ID" value="NC_011831.1"/>
</dbReference>
<dbReference type="SMR" id="B8G5X1"/>
<dbReference type="STRING" id="326427.Cagg_2842"/>
<dbReference type="KEGG" id="cag:Cagg_2842"/>
<dbReference type="eggNOG" id="COG0315">
    <property type="taxonomic scope" value="Bacteria"/>
</dbReference>
<dbReference type="HOGENOM" id="CLU_074693_1_1_0"/>
<dbReference type="OrthoDB" id="9794429at2"/>
<dbReference type="UniPathway" id="UPA00344"/>
<dbReference type="Proteomes" id="UP000002508">
    <property type="component" value="Chromosome"/>
</dbReference>
<dbReference type="GO" id="GO:0061799">
    <property type="term" value="F:cyclic pyranopterin monophosphate synthase activity"/>
    <property type="evidence" value="ECO:0007669"/>
    <property type="project" value="UniProtKB-UniRule"/>
</dbReference>
<dbReference type="GO" id="GO:0006777">
    <property type="term" value="P:Mo-molybdopterin cofactor biosynthetic process"/>
    <property type="evidence" value="ECO:0007669"/>
    <property type="project" value="UniProtKB-UniRule"/>
</dbReference>
<dbReference type="CDD" id="cd01420">
    <property type="entry name" value="MoaC_PE"/>
    <property type="match status" value="1"/>
</dbReference>
<dbReference type="Gene3D" id="3.30.70.640">
    <property type="entry name" value="Molybdopterin cofactor biosynthesis C (MoaC) domain"/>
    <property type="match status" value="1"/>
</dbReference>
<dbReference type="HAMAP" id="MF_01224_B">
    <property type="entry name" value="MoaC_B"/>
    <property type="match status" value="1"/>
</dbReference>
<dbReference type="InterPro" id="IPR023045">
    <property type="entry name" value="MoaC"/>
</dbReference>
<dbReference type="InterPro" id="IPR047594">
    <property type="entry name" value="MoaC_bact/euk"/>
</dbReference>
<dbReference type="InterPro" id="IPR036522">
    <property type="entry name" value="MoaC_sf"/>
</dbReference>
<dbReference type="InterPro" id="IPR050105">
    <property type="entry name" value="MoCo_biosynth_MoaA/MoaC"/>
</dbReference>
<dbReference type="InterPro" id="IPR002820">
    <property type="entry name" value="Mopterin_CF_biosynth-C_dom"/>
</dbReference>
<dbReference type="NCBIfam" id="TIGR00581">
    <property type="entry name" value="moaC"/>
    <property type="match status" value="1"/>
</dbReference>
<dbReference type="NCBIfam" id="NF006870">
    <property type="entry name" value="PRK09364.1"/>
    <property type="match status" value="1"/>
</dbReference>
<dbReference type="PANTHER" id="PTHR22960:SF29">
    <property type="entry name" value="CYCLIC PYRANOPTERIN MONOPHOSPHATE SYNTHASE"/>
    <property type="match status" value="1"/>
</dbReference>
<dbReference type="PANTHER" id="PTHR22960">
    <property type="entry name" value="MOLYBDOPTERIN COFACTOR SYNTHESIS PROTEIN A"/>
    <property type="match status" value="1"/>
</dbReference>
<dbReference type="Pfam" id="PF01967">
    <property type="entry name" value="MoaC"/>
    <property type="match status" value="1"/>
</dbReference>
<dbReference type="SUPFAM" id="SSF55040">
    <property type="entry name" value="Molybdenum cofactor biosynthesis protein C, MoaC"/>
    <property type="match status" value="1"/>
</dbReference>
<protein>
    <recommendedName>
        <fullName evidence="1">Cyclic pyranopterin monophosphate synthase</fullName>
        <ecNumber evidence="1">4.6.1.17</ecNumber>
    </recommendedName>
    <alternativeName>
        <fullName evidence="1">Molybdenum cofactor biosynthesis protein C</fullName>
    </alternativeName>
</protein>
<accession>B8G5X1</accession>
<keyword id="KW-0456">Lyase</keyword>
<keyword id="KW-0501">Molybdenum cofactor biosynthesis</keyword>